<sequence length="291" mass="31977">MEGMDVDLDAELMQKFSCLGTTDKDVLIGEFQRLLGFQLSPAGCAFFLDMTNWNLQAAIGAYYDFESPNINVPSMSFVEDVTIGEGESIPPDTQFTKTWRIQNTGTEVWPPGVCLKYVGGDQFGHVNMVMVRSLEPQEIADVSVQMCSPSTAGMYQGQWRMCTATGLYYGDVIWVILSVEVGGLLGVTQQLSSFETEFNTQPHRKVEGNFNPFASPQKNRQPDENNLKDPGGSELGTISKNTWGPAPDQIEQDQNGLSQNSVNLSPSSHSNNLSVVTYSKGFHGPYPFGQS</sequence>
<keyword id="KW-0963">Cytoplasm</keyword>
<keyword id="KW-0391">Immunity</keyword>
<keyword id="KW-0399">Innate immunity</keyword>
<keyword id="KW-0539">Nucleus</keyword>
<keyword id="KW-1185">Reference proteome</keyword>
<evidence type="ECO:0000250" key="1">
    <source>
        <dbReference type="UniProtKB" id="Q9H6K1"/>
    </source>
</evidence>
<evidence type="ECO:0000256" key="2">
    <source>
        <dbReference type="SAM" id="MobiDB-lite"/>
    </source>
</evidence>
<evidence type="ECO:0000305" key="3"/>
<comment type="function">
    <text evidence="1">May have a roles as negative regulator of innate antiviral response.</text>
</comment>
<comment type="subcellular location">
    <subcellularLocation>
        <location evidence="1">Cytoplasm</location>
    </subcellularLocation>
    <subcellularLocation>
        <location evidence="1">Nucleus</location>
    </subcellularLocation>
</comment>
<dbReference type="EMBL" id="AJ851611">
    <property type="protein sequence ID" value="CAH65245.1"/>
    <property type="molecule type" value="mRNA"/>
</dbReference>
<dbReference type="RefSeq" id="NP_001026090.1">
    <property type="nucleotide sequence ID" value="NM_001030919.1"/>
</dbReference>
<dbReference type="SMR" id="Q5F3N9"/>
<dbReference type="FunCoup" id="Q5F3N9">
    <property type="interactions" value="2559"/>
</dbReference>
<dbReference type="STRING" id="9031.ENSGALP00000055488"/>
<dbReference type="PaxDb" id="9031-ENSGALP00000004378"/>
<dbReference type="Ensembl" id="ENSGALT00010063592.1">
    <property type="protein sequence ID" value="ENSGALP00010039251.1"/>
    <property type="gene ID" value="ENSGALG00010026094.1"/>
</dbReference>
<dbReference type="GeneID" id="419902"/>
<dbReference type="KEGG" id="gga:419902"/>
<dbReference type="CTD" id="419902"/>
<dbReference type="VEuPathDB" id="HostDB:geneid_419902"/>
<dbReference type="eggNOG" id="KOG4351">
    <property type="taxonomic scope" value="Eukaryota"/>
</dbReference>
<dbReference type="GeneTree" id="ENSGT00490000043415"/>
<dbReference type="HOGENOM" id="CLU_076188_1_0_1"/>
<dbReference type="InParanoid" id="Q5F3N9"/>
<dbReference type="OMA" id="HWQGSPN"/>
<dbReference type="OrthoDB" id="661148at2759"/>
<dbReference type="PhylomeDB" id="Q5F3N9"/>
<dbReference type="TreeFam" id="TF105872"/>
<dbReference type="PRO" id="PR:Q5F3N9"/>
<dbReference type="Proteomes" id="UP000000539">
    <property type="component" value="Chromosome 26"/>
</dbReference>
<dbReference type="Bgee" id="ENSGALG00000041792">
    <property type="expression patterns" value="Expressed in testis and 12 other cell types or tissues"/>
</dbReference>
<dbReference type="GO" id="GO:0005813">
    <property type="term" value="C:centrosome"/>
    <property type="evidence" value="ECO:0007669"/>
    <property type="project" value="Ensembl"/>
</dbReference>
<dbReference type="GO" id="GO:0005829">
    <property type="term" value="C:cytosol"/>
    <property type="evidence" value="ECO:0007669"/>
    <property type="project" value="Ensembl"/>
</dbReference>
<dbReference type="GO" id="GO:0016607">
    <property type="term" value="C:nuclear speck"/>
    <property type="evidence" value="ECO:0007669"/>
    <property type="project" value="Ensembl"/>
</dbReference>
<dbReference type="GO" id="GO:0000407">
    <property type="term" value="C:phagophore assembly site"/>
    <property type="evidence" value="ECO:0000318"/>
    <property type="project" value="GO_Central"/>
</dbReference>
<dbReference type="GO" id="GO:0043130">
    <property type="term" value="F:ubiquitin binding"/>
    <property type="evidence" value="ECO:0000318"/>
    <property type="project" value="GO_Central"/>
</dbReference>
<dbReference type="GO" id="GO:0045087">
    <property type="term" value="P:innate immune response"/>
    <property type="evidence" value="ECO:0007669"/>
    <property type="project" value="UniProtKB-KW"/>
</dbReference>
<dbReference type="GO" id="GO:0016236">
    <property type="term" value="P:macroautophagy"/>
    <property type="evidence" value="ECO:0000318"/>
    <property type="project" value="GO_Central"/>
</dbReference>
<dbReference type="GO" id="GO:0050687">
    <property type="term" value="P:negative regulation of defense response to virus"/>
    <property type="evidence" value="ECO:0007669"/>
    <property type="project" value="Ensembl"/>
</dbReference>
<dbReference type="GO" id="GO:1900181">
    <property type="term" value="P:negative regulation of protein localization to nucleus"/>
    <property type="evidence" value="ECO:0007669"/>
    <property type="project" value="Ensembl"/>
</dbReference>
<dbReference type="GO" id="GO:0032720">
    <property type="term" value="P:negative regulation of tumor necrosis factor production"/>
    <property type="evidence" value="ECO:0007669"/>
    <property type="project" value="Ensembl"/>
</dbReference>
<dbReference type="GO" id="GO:0032480">
    <property type="term" value="P:negative regulation of type I interferon production"/>
    <property type="evidence" value="ECO:0007669"/>
    <property type="project" value="Ensembl"/>
</dbReference>
<dbReference type="CDD" id="cd14947">
    <property type="entry name" value="NBR1_like"/>
    <property type="match status" value="1"/>
</dbReference>
<dbReference type="CDD" id="cd14349">
    <property type="entry name" value="UBA_CF106"/>
    <property type="match status" value="1"/>
</dbReference>
<dbReference type="FunFam" id="1.10.8.10:FF:000015">
    <property type="entry name" value="Chromosome 6 C6orf106 homolog"/>
    <property type="match status" value="1"/>
</dbReference>
<dbReference type="FunFam" id="2.60.40.10:FF:000289">
    <property type="entry name" value="Chromosome 6 open reading frame 106"/>
    <property type="match status" value="1"/>
</dbReference>
<dbReference type="Gene3D" id="1.10.8.10">
    <property type="entry name" value="DNA helicase RuvA subunit, C-terminal domain"/>
    <property type="match status" value="1"/>
</dbReference>
<dbReference type="Gene3D" id="2.60.40.10">
    <property type="entry name" value="Immunoglobulins"/>
    <property type="match status" value="1"/>
</dbReference>
<dbReference type="InterPro" id="IPR039517">
    <property type="entry name" value="C6orf106_UBA-like"/>
</dbReference>
<dbReference type="InterPro" id="IPR013783">
    <property type="entry name" value="Ig-like_fold"/>
</dbReference>
<dbReference type="InterPro" id="IPR032350">
    <property type="entry name" value="N_BRCA1_central"/>
</dbReference>
<dbReference type="InterPro" id="IPR009060">
    <property type="entry name" value="UBA-like_sf"/>
</dbReference>
<dbReference type="PANTHER" id="PTHR20930">
    <property type="entry name" value="OVARIAN CARCINOMA ANTIGEN CA125-RELATED"/>
    <property type="match status" value="1"/>
</dbReference>
<dbReference type="PANTHER" id="PTHR20930:SF0">
    <property type="entry name" value="PROTEIN ILRUN"/>
    <property type="match status" value="1"/>
</dbReference>
<dbReference type="Pfam" id="PF16158">
    <property type="entry name" value="N_BRCA1_IG"/>
    <property type="match status" value="1"/>
</dbReference>
<dbReference type="Pfam" id="PF14555">
    <property type="entry name" value="UBA_4"/>
    <property type="match status" value="1"/>
</dbReference>
<dbReference type="SUPFAM" id="SSF46934">
    <property type="entry name" value="UBA-like"/>
    <property type="match status" value="1"/>
</dbReference>
<name>ILRUN_CHICK</name>
<proteinExistence type="evidence at transcript level"/>
<feature type="chain" id="PRO_0000223320" description="Protein ILRUN">
    <location>
        <begin position="1"/>
        <end position="291"/>
    </location>
</feature>
<feature type="region of interest" description="Disordered" evidence="2">
    <location>
        <begin position="199"/>
        <end position="275"/>
    </location>
</feature>
<feature type="compositionally biased region" description="Low complexity" evidence="2">
    <location>
        <begin position="257"/>
        <end position="275"/>
    </location>
</feature>
<gene>
    <name type="primary">ILRUN</name>
    <name type="ORF">RCJMB04_11e11</name>
</gene>
<reference key="1">
    <citation type="journal article" date="2005" name="Genome Biol.">
        <title>Full-length cDNAs from chicken bursal lymphocytes to facilitate gene function analysis.</title>
        <authorList>
            <person name="Caldwell R.B."/>
            <person name="Kierzek A.M."/>
            <person name="Arakawa H."/>
            <person name="Bezzubov Y."/>
            <person name="Zaim J."/>
            <person name="Fiedler P."/>
            <person name="Kutter S."/>
            <person name="Blagodatski A."/>
            <person name="Kostovska D."/>
            <person name="Koter M."/>
            <person name="Plachy J."/>
            <person name="Carninci P."/>
            <person name="Hayashizaki Y."/>
            <person name="Buerstedde J.-M."/>
        </authorList>
    </citation>
    <scope>NUCLEOTIDE SEQUENCE [LARGE SCALE MRNA]</scope>
    <source>
        <strain>CB</strain>
        <tissue>Bursa of Fabricius</tissue>
    </source>
</reference>
<organism>
    <name type="scientific">Gallus gallus</name>
    <name type="common">Chicken</name>
    <dbReference type="NCBI Taxonomy" id="9031"/>
    <lineage>
        <taxon>Eukaryota</taxon>
        <taxon>Metazoa</taxon>
        <taxon>Chordata</taxon>
        <taxon>Craniata</taxon>
        <taxon>Vertebrata</taxon>
        <taxon>Euteleostomi</taxon>
        <taxon>Archelosauria</taxon>
        <taxon>Archosauria</taxon>
        <taxon>Dinosauria</taxon>
        <taxon>Saurischia</taxon>
        <taxon>Theropoda</taxon>
        <taxon>Coelurosauria</taxon>
        <taxon>Aves</taxon>
        <taxon>Neognathae</taxon>
        <taxon>Galloanserae</taxon>
        <taxon>Galliformes</taxon>
        <taxon>Phasianidae</taxon>
        <taxon>Phasianinae</taxon>
        <taxon>Gallus</taxon>
    </lineage>
</organism>
<accession>Q5F3N9</accession>
<protein>
    <recommendedName>
        <fullName evidence="3">Protein ILRUN</fullName>
    </recommendedName>
</protein>